<protein>
    <recommendedName>
        <fullName evidence="1">tRNA (guanine-N(1)-)-methyltransferase</fullName>
        <ecNumber evidence="1">2.1.1.228</ecNumber>
    </recommendedName>
    <alternativeName>
        <fullName evidence="1">M1G-methyltransferase</fullName>
    </alternativeName>
    <alternativeName>
        <fullName evidence="1">tRNA [GM37] methyltransferase</fullName>
    </alternativeName>
</protein>
<sequence length="279" mass="30920">MSSSSGSAVNIAIVTLFPEMFAAITESGISRRAVEQGLVKLSFFNPRTYTTDKHQTVDDRPYGGGPGMVMRVEPLAKALLAAKQWHSEQRAEQALPNTAKETVIYMSPQGAQLNNQAVDTMAASGDFTIIAGRYEGVDQRFIDAFVDQEWSIGDYVLSGGELPAMVLIDALIRKLPGALGDAQSAEQDSFENGLLDCPHYTRPEELADAWQTSVDDRRVPAVLLSGDHKKIELWRLKQSLGRTWERRPDLLNKLDLDQSQRNLLTEYQQQKLSCSSSDD</sequence>
<proteinExistence type="inferred from homology"/>
<comment type="function">
    <text evidence="1">Specifically methylates guanosine-37 in various tRNAs.</text>
</comment>
<comment type="catalytic activity">
    <reaction evidence="1">
        <text>guanosine(37) in tRNA + S-adenosyl-L-methionine = N(1)-methylguanosine(37) in tRNA + S-adenosyl-L-homocysteine + H(+)</text>
        <dbReference type="Rhea" id="RHEA:36899"/>
        <dbReference type="Rhea" id="RHEA-COMP:10145"/>
        <dbReference type="Rhea" id="RHEA-COMP:10147"/>
        <dbReference type="ChEBI" id="CHEBI:15378"/>
        <dbReference type="ChEBI" id="CHEBI:57856"/>
        <dbReference type="ChEBI" id="CHEBI:59789"/>
        <dbReference type="ChEBI" id="CHEBI:73542"/>
        <dbReference type="ChEBI" id="CHEBI:74269"/>
        <dbReference type="EC" id="2.1.1.228"/>
    </reaction>
</comment>
<comment type="subunit">
    <text evidence="1">Homodimer.</text>
</comment>
<comment type="subcellular location">
    <subcellularLocation>
        <location evidence="1">Cytoplasm</location>
    </subcellularLocation>
</comment>
<comment type="similarity">
    <text evidence="1">Belongs to the RNA methyltransferase TrmD family.</text>
</comment>
<reference key="1">
    <citation type="journal article" date="2008" name="PLoS Genet.">
        <title>Complete genome sequence of the complex carbohydrate-degrading marine bacterium, Saccharophagus degradans strain 2-40 T.</title>
        <authorList>
            <person name="Weiner R.M."/>
            <person name="Taylor L.E. II"/>
            <person name="Henrissat B."/>
            <person name="Hauser L."/>
            <person name="Land M."/>
            <person name="Coutinho P.M."/>
            <person name="Rancurel C."/>
            <person name="Saunders E.H."/>
            <person name="Longmire A.G."/>
            <person name="Zhang H."/>
            <person name="Bayer E.A."/>
            <person name="Gilbert H.J."/>
            <person name="Larimer F."/>
            <person name="Zhulin I.B."/>
            <person name="Ekborg N.A."/>
            <person name="Lamed R."/>
            <person name="Richardson P.M."/>
            <person name="Borovok I."/>
            <person name="Hutcheson S."/>
        </authorList>
    </citation>
    <scope>NUCLEOTIDE SEQUENCE [LARGE SCALE GENOMIC DNA]</scope>
    <source>
        <strain>2-40 / ATCC 43961 / DSM 17024</strain>
    </source>
</reference>
<keyword id="KW-0963">Cytoplasm</keyword>
<keyword id="KW-0489">Methyltransferase</keyword>
<keyword id="KW-1185">Reference proteome</keyword>
<keyword id="KW-0949">S-adenosyl-L-methionine</keyword>
<keyword id="KW-0808">Transferase</keyword>
<keyword id="KW-0819">tRNA processing</keyword>
<accession>Q21LG2</accession>
<feature type="chain" id="PRO_0000257465" description="tRNA (guanine-N(1)-)-methyltransferase">
    <location>
        <begin position="1"/>
        <end position="279"/>
    </location>
</feature>
<feature type="binding site" evidence="1">
    <location>
        <position position="132"/>
    </location>
    <ligand>
        <name>S-adenosyl-L-methionine</name>
        <dbReference type="ChEBI" id="CHEBI:59789"/>
    </ligand>
</feature>
<feature type="binding site" evidence="1">
    <location>
        <begin position="152"/>
        <end position="157"/>
    </location>
    <ligand>
        <name>S-adenosyl-L-methionine</name>
        <dbReference type="ChEBI" id="CHEBI:59789"/>
    </ligand>
</feature>
<name>TRMD_SACD2</name>
<evidence type="ECO:0000255" key="1">
    <source>
        <dbReference type="HAMAP-Rule" id="MF_00605"/>
    </source>
</evidence>
<organism>
    <name type="scientific">Saccharophagus degradans (strain 2-40 / ATCC 43961 / DSM 17024)</name>
    <dbReference type="NCBI Taxonomy" id="203122"/>
    <lineage>
        <taxon>Bacteria</taxon>
        <taxon>Pseudomonadati</taxon>
        <taxon>Pseudomonadota</taxon>
        <taxon>Gammaproteobacteria</taxon>
        <taxon>Cellvibrionales</taxon>
        <taxon>Cellvibrionaceae</taxon>
        <taxon>Saccharophagus</taxon>
    </lineage>
</organism>
<gene>
    <name evidence="1" type="primary">trmD</name>
    <name type="ordered locus">Sde_1205</name>
</gene>
<dbReference type="EC" id="2.1.1.228" evidence="1"/>
<dbReference type="EMBL" id="CP000282">
    <property type="protein sequence ID" value="ABD80467.1"/>
    <property type="molecule type" value="Genomic_DNA"/>
</dbReference>
<dbReference type="RefSeq" id="WP_011467687.1">
    <property type="nucleotide sequence ID" value="NC_007912.1"/>
</dbReference>
<dbReference type="SMR" id="Q21LG2"/>
<dbReference type="STRING" id="203122.Sde_1205"/>
<dbReference type="GeneID" id="98612883"/>
<dbReference type="KEGG" id="sde:Sde_1205"/>
<dbReference type="eggNOG" id="COG0336">
    <property type="taxonomic scope" value="Bacteria"/>
</dbReference>
<dbReference type="HOGENOM" id="CLU_047363_0_1_6"/>
<dbReference type="OrthoDB" id="9807416at2"/>
<dbReference type="Proteomes" id="UP000001947">
    <property type="component" value="Chromosome"/>
</dbReference>
<dbReference type="GO" id="GO:0005829">
    <property type="term" value="C:cytosol"/>
    <property type="evidence" value="ECO:0007669"/>
    <property type="project" value="TreeGrafter"/>
</dbReference>
<dbReference type="GO" id="GO:0052906">
    <property type="term" value="F:tRNA (guanine(37)-N1)-methyltransferase activity"/>
    <property type="evidence" value="ECO:0007669"/>
    <property type="project" value="UniProtKB-UniRule"/>
</dbReference>
<dbReference type="GO" id="GO:0002939">
    <property type="term" value="P:tRNA N1-guanine methylation"/>
    <property type="evidence" value="ECO:0007669"/>
    <property type="project" value="TreeGrafter"/>
</dbReference>
<dbReference type="CDD" id="cd18080">
    <property type="entry name" value="TrmD-like"/>
    <property type="match status" value="1"/>
</dbReference>
<dbReference type="FunFam" id="1.10.1270.20:FF:000001">
    <property type="entry name" value="tRNA (guanine-N(1)-)-methyltransferase"/>
    <property type="match status" value="1"/>
</dbReference>
<dbReference type="FunFam" id="3.40.1280.10:FF:000001">
    <property type="entry name" value="tRNA (guanine-N(1)-)-methyltransferase"/>
    <property type="match status" value="1"/>
</dbReference>
<dbReference type="Gene3D" id="3.40.1280.10">
    <property type="match status" value="1"/>
</dbReference>
<dbReference type="Gene3D" id="1.10.1270.20">
    <property type="entry name" value="tRNA(m1g37)methyltransferase, domain 2"/>
    <property type="match status" value="1"/>
</dbReference>
<dbReference type="HAMAP" id="MF_00605">
    <property type="entry name" value="TrmD"/>
    <property type="match status" value="1"/>
</dbReference>
<dbReference type="InterPro" id="IPR029028">
    <property type="entry name" value="Alpha/beta_knot_MTases"/>
</dbReference>
<dbReference type="InterPro" id="IPR023148">
    <property type="entry name" value="tRNA_m1G_MeTrfase_C_sf"/>
</dbReference>
<dbReference type="InterPro" id="IPR002649">
    <property type="entry name" value="tRNA_m1G_MeTrfase_TrmD"/>
</dbReference>
<dbReference type="InterPro" id="IPR029026">
    <property type="entry name" value="tRNA_m1G_MTases_N"/>
</dbReference>
<dbReference type="InterPro" id="IPR016009">
    <property type="entry name" value="tRNA_MeTrfase_TRMD/TRM10"/>
</dbReference>
<dbReference type="NCBIfam" id="NF000648">
    <property type="entry name" value="PRK00026.1"/>
    <property type="match status" value="1"/>
</dbReference>
<dbReference type="NCBIfam" id="TIGR00088">
    <property type="entry name" value="trmD"/>
    <property type="match status" value="1"/>
</dbReference>
<dbReference type="PANTHER" id="PTHR46417">
    <property type="entry name" value="TRNA (GUANINE-N(1)-)-METHYLTRANSFERASE"/>
    <property type="match status" value="1"/>
</dbReference>
<dbReference type="PANTHER" id="PTHR46417:SF1">
    <property type="entry name" value="TRNA (GUANINE-N(1)-)-METHYLTRANSFERASE"/>
    <property type="match status" value="1"/>
</dbReference>
<dbReference type="Pfam" id="PF01746">
    <property type="entry name" value="tRNA_m1G_MT"/>
    <property type="match status" value="1"/>
</dbReference>
<dbReference type="PIRSF" id="PIRSF000386">
    <property type="entry name" value="tRNA_mtase"/>
    <property type="match status" value="1"/>
</dbReference>
<dbReference type="SUPFAM" id="SSF75217">
    <property type="entry name" value="alpha/beta knot"/>
    <property type="match status" value="1"/>
</dbReference>